<feature type="chain" id="PRO_0000405030" description="HTH-type transcriptional repressor KstR">
    <location>
        <begin position="1"/>
        <end position="212"/>
    </location>
</feature>
<feature type="domain" description="HTH tetR-type" evidence="2">
    <location>
        <begin position="28"/>
        <end position="88"/>
    </location>
</feature>
<feature type="DNA-binding region" description="H-T-H motif" evidence="2">
    <location>
        <begin position="51"/>
        <end position="70"/>
    </location>
</feature>
<feature type="region of interest" description="Disordered" evidence="3">
    <location>
        <begin position="1"/>
        <end position="28"/>
    </location>
</feature>
<feature type="compositionally biased region" description="Low complexity" evidence="3">
    <location>
        <begin position="1"/>
        <end position="11"/>
    </location>
</feature>
<proteinExistence type="evidence at protein level"/>
<accession>Q0S868</accession>
<reference key="1">
    <citation type="journal article" date="2006" name="Proc. Natl. Acad. Sci. U.S.A.">
        <title>The complete genome of Rhodococcus sp. RHA1 provides insights into a catabolic powerhouse.</title>
        <authorList>
            <person name="McLeod M.P."/>
            <person name="Warren R.L."/>
            <person name="Hsiao W.W.L."/>
            <person name="Araki N."/>
            <person name="Myhre M."/>
            <person name="Fernandes C."/>
            <person name="Miyazawa D."/>
            <person name="Wong W."/>
            <person name="Lillquist A.L."/>
            <person name="Wang D."/>
            <person name="Dosanjh M."/>
            <person name="Hara H."/>
            <person name="Petrescu A."/>
            <person name="Morin R.D."/>
            <person name="Yang G."/>
            <person name="Stott J.M."/>
            <person name="Schein J.E."/>
            <person name="Shin H."/>
            <person name="Smailus D."/>
            <person name="Siddiqui A.S."/>
            <person name="Marra M.A."/>
            <person name="Jones S.J.M."/>
            <person name="Holt R."/>
            <person name="Brinkman F.S.L."/>
            <person name="Miyauchi K."/>
            <person name="Fukuda M."/>
            <person name="Davies J.E."/>
            <person name="Mohn W.W."/>
            <person name="Eltis L.D."/>
        </authorList>
    </citation>
    <scope>NUCLEOTIDE SEQUENCE [LARGE SCALE GENOMIC DNA]</scope>
    <source>
        <strain>RHA1</strain>
    </source>
</reference>
<reference key="2">
    <citation type="journal article" date="2007" name="Proc. Natl. Acad. Sci. U.S.A.">
        <title>A gene cluster encoding cholesterol catabolism in a soil actinomycete provides insight into Mycobacterium tuberculosis survival in macrophages.</title>
        <authorList>
            <person name="Van der Geize R."/>
            <person name="Yam K."/>
            <person name="Heuser T."/>
            <person name="Wilbrink M.H."/>
            <person name="Hara H."/>
            <person name="Anderton M.C."/>
            <person name="Sim E."/>
            <person name="Dijkhuizen L."/>
            <person name="Davies J.E."/>
            <person name="Mohn W.W."/>
            <person name="Eltis L.D."/>
        </authorList>
    </citation>
    <scope>FUNCTION IN CHOLESTEROL DEGRADATION</scope>
    <source>
        <strain>RHA1</strain>
    </source>
</reference>
<gene>
    <name type="primary">kstR</name>
    <name type="ordered locus">RHA1_ro04482</name>
</gene>
<dbReference type="EMBL" id="CP000431">
    <property type="protein sequence ID" value="ABG96268.1"/>
    <property type="molecule type" value="Genomic_DNA"/>
</dbReference>
<dbReference type="RefSeq" id="WP_009477547.1">
    <property type="nucleotide sequence ID" value="NC_008268.1"/>
</dbReference>
<dbReference type="SMR" id="Q0S868"/>
<dbReference type="KEGG" id="rha:RHA1_ro04482"/>
<dbReference type="eggNOG" id="COG1309">
    <property type="taxonomic scope" value="Bacteria"/>
</dbReference>
<dbReference type="HOGENOM" id="CLU_092076_1_0_11"/>
<dbReference type="OrthoDB" id="9809994at2"/>
<dbReference type="Proteomes" id="UP000008710">
    <property type="component" value="Chromosome"/>
</dbReference>
<dbReference type="GO" id="GO:0003700">
    <property type="term" value="F:DNA-binding transcription factor activity"/>
    <property type="evidence" value="ECO:0007669"/>
    <property type="project" value="TreeGrafter"/>
</dbReference>
<dbReference type="GO" id="GO:0000976">
    <property type="term" value="F:transcription cis-regulatory region binding"/>
    <property type="evidence" value="ECO:0007669"/>
    <property type="project" value="TreeGrafter"/>
</dbReference>
<dbReference type="GO" id="GO:0006355">
    <property type="term" value="P:regulation of DNA-templated transcription"/>
    <property type="evidence" value="ECO:0000250"/>
    <property type="project" value="UniProtKB"/>
</dbReference>
<dbReference type="FunFam" id="1.10.357.10:FF:000007">
    <property type="entry name" value="TetR family transcriptional regulator"/>
    <property type="match status" value="1"/>
</dbReference>
<dbReference type="Gene3D" id="1.10.357.10">
    <property type="entry name" value="Tetracycline Repressor, domain 2"/>
    <property type="match status" value="1"/>
</dbReference>
<dbReference type="InterPro" id="IPR009057">
    <property type="entry name" value="Homeodomain-like_sf"/>
</dbReference>
<dbReference type="InterPro" id="IPR050109">
    <property type="entry name" value="HTH-type_TetR-like_transc_reg"/>
</dbReference>
<dbReference type="InterPro" id="IPR001647">
    <property type="entry name" value="HTH_TetR"/>
</dbReference>
<dbReference type="InterPro" id="IPR041642">
    <property type="entry name" value="KstR_C"/>
</dbReference>
<dbReference type="NCBIfam" id="NF033703">
    <property type="entry name" value="transcr_KstR"/>
    <property type="match status" value="1"/>
</dbReference>
<dbReference type="PANTHER" id="PTHR30055">
    <property type="entry name" value="HTH-TYPE TRANSCRIPTIONAL REGULATOR RUTR"/>
    <property type="match status" value="1"/>
</dbReference>
<dbReference type="PANTHER" id="PTHR30055:SF242">
    <property type="entry name" value="HTH-TYPE TRANSCRIPTIONAL REPRESSOR KSTR"/>
    <property type="match status" value="1"/>
</dbReference>
<dbReference type="Pfam" id="PF17925">
    <property type="entry name" value="TetR_C_20"/>
    <property type="match status" value="1"/>
</dbReference>
<dbReference type="Pfam" id="PF00440">
    <property type="entry name" value="TetR_N"/>
    <property type="match status" value="1"/>
</dbReference>
<dbReference type="PRINTS" id="PR00455">
    <property type="entry name" value="HTHTETR"/>
</dbReference>
<dbReference type="SUPFAM" id="SSF46689">
    <property type="entry name" value="Homeodomain-like"/>
    <property type="match status" value="1"/>
</dbReference>
<dbReference type="PROSITE" id="PS50977">
    <property type="entry name" value="HTH_TETR_2"/>
    <property type="match status" value="1"/>
</dbReference>
<name>KSTR_RHOJR</name>
<protein>
    <recommendedName>
        <fullName>HTH-type transcriptional repressor KstR</fullName>
    </recommendedName>
</protein>
<keyword id="KW-0238">DNA-binding</keyword>
<keyword id="KW-0678">Repressor</keyword>
<keyword id="KW-0804">Transcription</keyword>
<keyword id="KW-0805">Transcription regulation</keyword>
<sequence>MTTSSRSRSSTVAAATLGEDDLSSNAQKERRKRILDATLALASKGGYEAVQMRAVAERADVAVGTLYRYFPSKVHLLVSALAREFERIDSRGKNPPGRNPLERMQLILSQITRAMQRDPLLTEAMTRAFMFADASAAAEVDQVGKLMDRLFARAMTDTEPTEDQLAVARVISDVWLSNLVAWLTRRSSATDVANRLELTVELLLGDGSRRPE</sequence>
<organism>
    <name type="scientific">Rhodococcus jostii (strain RHA1)</name>
    <dbReference type="NCBI Taxonomy" id="101510"/>
    <lineage>
        <taxon>Bacteria</taxon>
        <taxon>Bacillati</taxon>
        <taxon>Actinomycetota</taxon>
        <taxon>Actinomycetes</taxon>
        <taxon>Mycobacteriales</taxon>
        <taxon>Nocardiaceae</taxon>
        <taxon>Rhodococcus</taxon>
    </lineage>
</organism>
<comment type="function">
    <text evidence="4">Controls the expression of genes used for utilizing diverse lipids as energy sources.</text>
</comment>
<comment type="subunit">
    <text evidence="1">Homodimer.</text>
</comment>
<evidence type="ECO:0000250" key="1"/>
<evidence type="ECO:0000255" key="2">
    <source>
        <dbReference type="PROSITE-ProRule" id="PRU00335"/>
    </source>
</evidence>
<evidence type="ECO:0000256" key="3">
    <source>
        <dbReference type="SAM" id="MobiDB-lite"/>
    </source>
</evidence>
<evidence type="ECO:0000305" key="4">
    <source>
    </source>
</evidence>